<feature type="chain" id="PRO_1000054226" description="GTP 3',8-cyclase">
    <location>
        <begin position="1"/>
        <end position="329"/>
    </location>
</feature>
<feature type="domain" description="Radical SAM core" evidence="2">
    <location>
        <begin position="8"/>
        <end position="234"/>
    </location>
</feature>
<feature type="binding site" evidence="1">
    <location>
        <position position="17"/>
    </location>
    <ligand>
        <name>GTP</name>
        <dbReference type="ChEBI" id="CHEBI:37565"/>
    </ligand>
</feature>
<feature type="binding site" evidence="1">
    <location>
        <position position="24"/>
    </location>
    <ligand>
        <name>[4Fe-4S] cluster</name>
        <dbReference type="ChEBI" id="CHEBI:49883"/>
        <label>1</label>
        <note>4Fe-4S-S-AdoMet</note>
    </ligand>
</feature>
<feature type="binding site" evidence="1">
    <location>
        <position position="28"/>
    </location>
    <ligand>
        <name>[4Fe-4S] cluster</name>
        <dbReference type="ChEBI" id="CHEBI:49883"/>
        <label>1</label>
        <note>4Fe-4S-S-AdoMet</note>
    </ligand>
</feature>
<feature type="binding site" evidence="1">
    <location>
        <position position="30"/>
    </location>
    <ligand>
        <name>S-adenosyl-L-methionine</name>
        <dbReference type="ChEBI" id="CHEBI:59789"/>
    </ligand>
</feature>
<feature type="binding site" evidence="1">
    <location>
        <position position="31"/>
    </location>
    <ligand>
        <name>[4Fe-4S] cluster</name>
        <dbReference type="ChEBI" id="CHEBI:49883"/>
        <label>1</label>
        <note>4Fe-4S-S-AdoMet</note>
    </ligand>
</feature>
<feature type="binding site" evidence="1">
    <location>
        <position position="68"/>
    </location>
    <ligand>
        <name>GTP</name>
        <dbReference type="ChEBI" id="CHEBI:37565"/>
    </ligand>
</feature>
<feature type="binding site" evidence="1">
    <location>
        <position position="72"/>
    </location>
    <ligand>
        <name>S-adenosyl-L-methionine</name>
        <dbReference type="ChEBI" id="CHEBI:59789"/>
    </ligand>
</feature>
<feature type="binding site" evidence="1">
    <location>
        <position position="99"/>
    </location>
    <ligand>
        <name>GTP</name>
        <dbReference type="ChEBI" id="CHEBI:37565"/>
    </ligand>
</feature>
<feature type="binding site" evidence="1">
    <location>
        <position position="123"/>
    </location>
    <ligand>
        <name>S-adenosyl-L-methionine</name>
        <dbReference type="ChEBI" id="CHEBI:59789"/>
    </ligand>
</feature>
<feature type="binding site" evidence="1">
    <location>
        <position position="160"/>
    </location>
    <ligand>
        <name>GTP</name>
        <dbReference type="ChEBI" id="CHEBI:37565"/>
    </ligand>
</feature>
<feature type="binding site" evidence="1">
    <location>
        <position position="194"/>
    </location>
    <ligand>
        <name>S-adenosyl-L-methionine</name>
        <dbReference type="ChEBI" id="CHEBI:59789"/>
    </ligand>
</feature>
<feature type="binding site" evidence="1">
    <location>
        <position position="257"/>
    </location>
    <ligand>
        <name>[4Fe-4S] cluster</name>
        <dbReference type="ChEBI" id="CHEBI:49883"/>
        <label>2</label>
        <note>4Fe-4S-substrate</note>
    </ligand>
</feature>
<feature type="binding site" evidence="1">
    <location>
        <position position="260"/>
    </location>
    <ligand>
        <name>[4Fe-4S] cluster</name>
        <dbReference type="ChEBI" id="CHEBI:49883"/>
        <label>2</label>
        <note>4Fe-4S-substrate</note>
    </ligand>
</feature>
<feature type="binding site" evidence="1">
    <location>
        <begin position="262"/>
        <end position="264"/>
    </location>
    <ligand>
        <name>GTP</name>
        <dbReference type="ChEBI" id="CHEBI:37565"/>
    </ligand>
</feature>
<feature type="binding site" evidence="1">
    <location>
        <position position="274"/>
    </location>
    <ligand>
        <name>[4Fe-4S] cluster</name>
        <dbReference type="ChEBI" id="CHEBI:49883"/>
        <label>2</label>
        <note>4Fe-4S-substrate</note>
    </ligand>
</feature>
<keyword id="KW-0004">4Fe-4S</keyword>
<keyword id="KW-0342">GTP-binding</keyword>
<keyword id="KW-0408">Iron</keyword>
<keyword id="KW-0411">Iron-sulfur</keyword>
<keyword id="KW-0456">Lyase</keyword>
<keyword id="KW-0479">Metal-binding</keyword>
<keyword id="KW-0501">Molybdenum cofactor biosynthesis</keyword>
<keyword id="KW-0547">Nucleotide-binding</keyword>
<keyword id="KW-1185">Reference proteome</keyword>
<keyword id="KW-0949">S-adenosyl-L-methionine</keyword>
<sequence>MASQLTDAFARKFYYLRLSITDVCNFRCTYCLPDGYKPSGVTNKGFLTVDEIRRVTRAFASLGTEKVRLTGGEPSLRRDFTDIIAAVRENDAIRQIAVTTNGYRLERDVANWRDAGLTGINVSVDSLDARQFHAITGQDKFNQVMAGIDAAFEVGFEKVKVNTVLMRDVNHHQLDTFLNWIQHRPIQLRFIELMETGEGSELFRKHHISGQVLRDELLRRGWIHQLRQRSDGPAQVFCHPDYAGEIGLIMPYEKDFCATCNRLRVSSIGKLHLCLFGEGGVNLRDLLEDDTQQQALEARISAALREKKQTHFLHQNNTGITQNLSYIGG</sequence>
<reference key="1">
    <citation type="journal article" date="2005" name="Nucleic Acids Res.">
        <title>Genome dynamics and diversity of Shigella species, the etiologic agents of bacillary dysentery.</title>
        <authorList>
            <person name="Yang F."/>
            <person name="Yang J."/>
            <person name="Zhang X."/>
            <person name="Chen L."/>
            <person name="Jiang Y."/>
            <person name="Yan Y."/>
            <person name="Tang X."/>
            <person name="Wang J."/>
            <person name="Xiong Z."/>
            <person name="Dong J."/>
            <person name="Xue Y."/>
            <person name="Zhu Y."/>
            <person name="Xu X."/>
            <person name="Sun L."/>
            <person name="Chen S."/>
            <person name="Nie H."/>
            <person name="Peng J."/>
            <person name="Xu J."/>
            <person name="Wang Y."/>
            <person name="Yuan Z."/>
            <person name="Wen Y."/>
            <person name="Yao Z."/>
            <person name="Shen Y."/>
            <person name="Qiang B."/>
            <person name="Hou Y."/>
            <person name="Yu J."/>
            <person name="Jin Q."/>
        </authorList>
    </citation>
    <scope>NUCLEOTIDE SEQUENCE [LARGE SCALE GENOMIC DNA]</scope>
    <source>
        <strain>Ss046</strain>
    </source>
</reference>
<proteinExistence type="inferred from homology"/>
<organism>
    <name type="scientific">Shigella sonnei (strain Ss046)</name>
    <dbReference type="NCBI Taxonomy" id="300269"/>
    <lineage>
        <taxon>Bacteria</taxon>
        <taxon>Pseudomonadati</taxon>
        <taxon>Pseudomonadota</taxon>
        <taxon>Gammaproteobacteria</taxon>
        <taxon>Enterobacterales</taxon>
        <taxon>Enterobacteriaceae</taxon>
        <taxon>Shigella</taxon>
    </lineage>
</organism>
<evidence type="ECO:0000255" key="1">
    <source>
        <dbReference type="HAMAP-Rule" id="MF_01225"/>
    </source>
</evidence>
<evidence type="ECO:0000255" key="2">
    <source>
        <dbReference type="PROSITE-ProRule" id="PRU01266"/>
    </source>
</evidence>
<accession>Q3Z403</accession>
<name>MOAA_SHISS</name>
<comment type="function">
    <text evidence="1">Catalyzes the cyclization of GTP to (8S)-3',8-cyclo-7,8-dihydroguanosine 5'-triphosphate.</text>
</comment>
<comment type="catalytic activity">
    <reaction evidence="1">
        <text>GTP + AH2 + S-adenosyl-L-methionine = (8S)-3',8-cyclo-7,8-dihydroguanosine 5'-triphosphate + 5'-deoxyadenosine + L-methionine + A + H(+)</text>
        <dbReference type="Rhea" id="RHEA:49576"/>
        <dbReference type="ChEBI" id="CHEBI:13193"/>
        <dbReference type="ChEBI" id="CHEBI:15378"/>
        <dbReference type="ChEBI" id="CHEBI:17319"/>
        <dbReference type="ChEBI" id="CHEBI:17499"/>
        <dbReference type="ChEBI" id="CHEBI:37565"/>
        <dbReference type="ChEBI" id="CHEBI:57844"/>
        <dbReference type="ChEBI" id="CHEBI:59789"/>
        <dbReference type="ChEBI" id="CHEBI:131766"/>
        <dbReference type="EC" id="4.1.99.22"/>
    </reaction>
</comment>
<comment type="cofactor">
    <cofactor evidence="1">
        <name>[4Fe-4S] cluster</name>
        <dbReference type="ChEBI" id="CHEBI:49883"/>
    </cofactor>
    <text evidence="1">Binds 2 [4Fe-4S] clusters. Binds 1 [4Fe-4S] cluster coordinated with 3 cysteines and an exchangeable S-adenosyl-L-methionine and 1 [4Fe-4S] cluster coordinated with 3 cysteines and the GTP-derived substrate.</text>
</comment>
<comment type="pathway">
    <text evidence="1">Cofactor biosynthesis; molybdopterin biosynthesis.</text>
</comment>
<comment type="subunit">
    <text evidence="1">Monomer and homodimer.</text>
</comment>
<comment type="similarity">
    <text evidence="1">Belongs to the radical SAM superfamily. MoaA family.</text>
</comment>
<gene>
    <name evidence="1" type="primary">moaA</name>
    <name type="ordered locus">SSON_0760</name>
</gene>
<dbReference type="EC" id="4.1.99.22" evidence="1"/>
<dbReference type="EMBL" id="CP000038">
    <property type="protein sequence ID" value="AAZ87509.1"/>
    <property type="molecule type" value="Genomic_DNA"/>
</dbReference>
<dbReference type="RefSeq" id="WP_001315357.1">
    <property type="nucleotide sequence ID" value="NC_007384.1"/>
</dbReference>
<dbReference type="SMR" id="Q3Z403"/>
<dbReference type="GeneID" id="93776649"/>
<dbReference type="KEGG" id="ssn:SSON_0760"/>
<dbReference type="HOGENOM" id="CLU_009273_0_1_6"/>
<dbReference type="UniPathway" id="UPA00344"/>
<dbReference type="Proteomes" id="UP000002529">
    <property type="component" value="Chromosome"/>
</dbReference>
<dbReference type="GO" id="GO:0051539">
    <property type="term" value="F:4 iron, 4 sulfur cluster binding"/>
    <property type="evidence" value="ECO:0007669"/>
    <property type="project" value="UniProtKB-UniRule"/>
</dbReference>
<dbReference type="GO" id="GO:0061799">
    <property type="term" value="F:cyclic pyranopterin monophosphate synthase activity"/>
    <property type="evidence" value="ECO:0007669"/>
    <property type="project" value="TreeGrafter"/>
</dbReference>
<dbReference type="GO" id="GO:0061798">
    <property type="term" value="F:GTP 3',8'-cyclase activity"/>
    <property type="evidence" value="ECO:0007669"/>
    <property type="project" value="UniProtKB-UniRule"/>
</dbReference>
<dbReference type="GO" id="GO:0005525">
    <property type="term" value="F:GTP binding"/>
    <property type="evidence" value="ECO:0007669"/>
    <property type="project" value="UniProtKB-UniRule"/>
</dbReference>
<dbReference type="GO" id="GO:0046872">
    <property type="term" value="F:metal ion binding"/>
    <property type="evidence" value="ECO:0007669"/>
    <property type="project" value="UniProtKB-KW"/>
</dbReference>
<dbReference type="GO" id="GO:1904047">
    <property type="term" value="F:S-adenosyl-L-methionine binding"/>
    <property type="evidence" value="ECO:0007669"/>
    <property type="project" value="UniProtKB-UniRule"/>
</dbReference>
<dbReference type="GO" id="GO:0006777">
    <property type="term" value="P:Mo-molybdopterin cofactor biosynthetic process"/>
    <property type="evidence" value="ECO:0007669"/>
    <property type="project" value="UniProtKB-UniRule"/>
</dbReference>
<dbReference type="CDD" id="cd01335">
    <property type="entry name" value="Radical_SAM"/>
    <property type="match status" value="1"/>
</dbReference>
<dbReference type="CDD" id="cd21117">
    <property type="entry name" value="Twitch_MoaA"/>
    <property type="match status" value="1"/>
</dbReference>
<dbReference type="FunFam" id="3.20.20.70:FF:000057">
    <property type="entry name" value="GTP 3',8-cyclase"/>
    <property type="match status" value="1"/>
</dbReference>
<dbReference type="Gene3D" id="3.20.20.70">
    <property type="entry name" value="Aldolase class I"/>
    <property type="match status" value="1"/>
</dbReference>
<dbReference type="HAMAP" id="MF_01225_B">
    <property type="entry name" value="MoaA_B"/>
    <property type="match status" value="1"/>
</dbReference>
<dbReference type="InterPro" id="IPR013785">
    <property type="entry name" value="Aldolase_TIM"/>
</dbReference>
<dbReference type="InterPro" id="IPR006638">
    <property type="entry name" value="Elp3/MiaA/NifB-like_rSAM"/>
</dbReference>
<dbReference type="InterPro" id="IPR013483">
    <property type="entry name" value="MoaA"/>
</dbReference>
<dbReference type="InterPro" id="IPR000385">
    <property type="entry name" value="MoaA_NifB_PqqE_Fe-S-bd_CS"/>
</dbReference>
<dbReference type="InterPro" id="IPR010505">
    <property type="entry name" value="MoaA_twitch"/>
</dbReference>
<dbReference type="InterPro" id="IPR050105">
    <property type="entry name" value="MoCo_biosynth_MoaA/MoaC"/>
</dbReference>
<dbReference type="InterPro" id="IPR007197">
    <property type="entry name" value="rSAM"/>
</dbReference>
<dbReference type="NCBIfam" id="TIGR02666">
    <property type="entry name" value="moaA"/>
    <property type="match status" value="1"/>
</dbReference>
<dbReference type="PANTHER" id="PTHR22960:SF28">
    <property type="entry name" value="GTP 3',8-CYCLASE"/>
    <property type="match status" value="1"/>
</dbReference>
<dbReference type="PANTHER" id="PTHR22960">
    <property type="entry name" value="MOLYBDOPTERIN COFACTOR SYNTHESIS PROTEIN A"/>
    <property type="match status" value="1"/>
</dbReference>
<dbReference type="Pfam" id="PF13353">
    <property type="entry name" value="Fer4_12"/>
    <property type="match status" value="1"/>
</dbReference>
<dbReference type="Pfam" id="PF06463">
    <property type="entry name" value="Mob_synth_C"/>
    <property type="match status" value="1"/>
</dbReference>
<dbReference type="Pfam" id="PF04055">
    <property type="entry name" value="Radical_SAM"/>
    <property type="match status" value="1"/>
</dbReference>
<dbReference type="SFLD" id="SFLDG01383">
    <property type="entry name" value="cyclic_pyranopterin_phosphate"/>
    <property type="match status" value="1"/>
</dbReference>
<dbReference type="SFLD" id="SFLDS00029">
    <property type="entry name" value="Radical_SAM"/>
    <property type="match status" value="1"/>
</dbReference>
<dbReference type="SMART" id="SM00729">
    <property type="entry name" value="Elp3"/>
    <property type="match status" value="1"/>
</dbReference>
<dbReference type="SUPFAM" id="SSF102114">
    <property type="entry name" value="Radical SAM enzymes"/>
    <property type="match status" value="1"/>
</dbReference>
<dbReference type="PROSITE" id="PS01305">
    <property type="entry name" value="MOAA_NIFB_PQQE"/>
    <property type="match status" value="1"/>
</dbReference>
<dbReference type="PROSITE" id="PS51918">
    <property type="entry name" value="RADICAL_SAM"/>
    <property type="match status" value="1"/>
</dbReference>
<protein>
    <recommendedName>
        <fullName evidence="1">GTP 3',8-cyclase</fullName>
        <ecNumber evidence="1">4.1.99.22</ecNumber>
    </recommendedName>
    <alternativeName>
        <fullName evidence="1">Molybdenum cofactor biosynthesis protein A</fullName>
    </alternativeName>
</protein>